<sequence length="130" mass="15222">MEAILMIGVITLCVIFLLSGRNNKKIQEARELEDYLEDLNQRIAQRTQILSELNEVITNRSVDKSVNMSACEIAVLDLYEQSNIRIPSDIIEDMVNQRLQTEQDVLNYIETQRTYWKLENQKKLYRGSLK</sequence>
<organismHost>
    <name type="scientific">Bacillus subtilis</name>
    <dbReference type="NCBI Taxonomy" id="1423"/>
</organismHost>
<name>GP167_BPPZA</name>
<organism>
    <name type="scientific">Bacillus phage PZA</name>
    <name type="common">Bacteriophage PZA</name>
    <dbReference type="NCBI Taxonomy" id="10757"/>
    <lineage>
        <taxon>Viruses</taxon>
        <taxon>Duplodnaviria</taxon>
        <taxon>Heunggongvirae</taxon>
        <taxon>Uroviricota</taxon>
        <taxon>Caudoviricetes</taxon>
        <taxon>Salasmaviridae</taxon>
        <taxon>Picovirinae</taxon>
        <taxon>Salasvirus</taxon>
        <taxon>Salasvirus PZA</taxon>
    </lineage>
</organism>
<keyword id="KW-0175">Coiled coil</keyword>
<keyword id="KW-0235">DNA replication</keyword>
<keyword id="KW-0238">DNA-binding</keyword>
<keyword id="KW-0244">Early protein</keyword>
<keyword id="KW-1032">Host cell membrane</keyword>
<keyword id="KW-1043">Host membrane</keyword>
<keyword id="KW-0472">Membrane</keyword>
<keyword id="KW-0812">Transmembrane</keyword>
<keyword id="KW-1133">Transmembrane helix</keyword>
<keyword id="KW-1194">Viral DNA replication</keyword>
<protein>
    <recommendedName>
        <fullName>DNA replication protein 16.7</fullName>
    </recommendedName>
    <alternativeName>
        <fullName>Gene product 16.7</fullName>
        <shortName>gp16.7</shortName>
    </alternativeName>
    <alternativeName>
        <fullName>Protein p16.7</fullName>
    </alternativeName>
</protein>
<comment type="function">
    <text evidence="1">Binds to the long stretches of ssDNA of the viral DNA replication intermediates created during the protein-primed mechanism of replication of the viral genome and attaches the viral DNA to the membrane of the infected cells. Required for the redistribution of replicating viral DNA from the initial replication site to membrane-associated sites surrounding the nucleoid. Required for the second pull step of DNA ejection.</text>
</comment>
<comment type="subunit">
    <text evidence="1">Homodimer; homooligomer. Interacts with DNA; one dsDNA binding subunit is constituted by three p16.7 dimers.</text>
</comment>
<comment type="subcellular location">
    <subcellularLocation>
        <location evidence="1">Host cell membrane</location>
        <topology evidence="1">Single-pass membrane protein</topology>
    </subcellularLocation>
</comment>
<comment type="similarity">
    <text evidence="3">Belongs to the phi29likevirus gp16.7 family.</text>
</comment>
<accession>P08386</accession>
<reference key="1">
    <citation type="journal article" date="1986" name="Gene">
        <title>Nucleotide sequence of the right early region of Bacillus subtilis phage PZA completes the 19366-bp sequence of PZA genome. Comparison with the homologous sequence of phage phi 29.</title>
        <authorList>
            <person name="Paces V."/>
            <person name="Vlcek C."/>
            <person name="Urbanek P."/>
            <person name="Hostomsky Z."/>
        </authorList>
    </citation>
    <scope>NUCLEOTIDE SEQUENCE [GENOMIC DNA]</scope>
</reference>
<evidence type="ECO:0000250" key="1">
    <source>
        <dbReference type="UniProtKB" id="P16517"/>
    </source>
</evidence>
<evidence type="ECO:0000255" key="2"/>
<evidence type="ECO:0000305" key="3"/>
<dbReference type="EMBL" id="M11813">
    <property type="protein sequence ID" value="AAA88496.1"/>
    <property type="molecule type" value="Genomic_DNA"/>
</dbReference>
<dbReference type="PIR" id="C29004">
    <property type="entry name" value="WRBP67"/>
</dbReference>
<dbReference type="SMR" id="P08386"/>
<dbReference type="TCDB" id="9.B.80.1.1">
    <property type="family name" value="the bacillus phage Phi29 (a podovirus) dna ejection system (Phi29-e) family"/>
</dbReference>
<dbReference type="Proteomes" id="UP000000855">
    <property type="component" value="Segment"/>
</dbReference>
<dbReference type="GO" id="GO:0020002">
    <property type="term" value="C:host cell plasma membrane"/>
    <property type="evidence" value="ECO:0007669"/>
    <property type="project" value="UniProtKB-SubCell"/>
</dbReference>
<dbReference type="GO" id="GO:0016020">
    <property type="term" value="C:membrane"/>
    <property type="evidence" value="ECO:0007669"/>
    <property type="project" value="UniProtKB-KW"/>
</dbReference>
<dbReference type="GO" id="GO:0003677">
    <property type="term" value="F:DNA binding"/>
    <property type="evidence" value="ECO:0007669"/>
    <property type="project" value="UniProtKB-KW"/>
</dbReference>
<dbReference type="GO" id="GO:0006260">
    <property type="term" value="P:DNA replication"/>
    <property type="evidence" value="ECO:0007669"/>
    <property type="project" value="UniProtKB-KW"/>
</dbReference>
<dbReference type="GO" id="GO:0039693">
    <property type="term" value="P:viral DNA genome replication"/>
    <property type="evidence" value="ECO:0007669"/>
    <property type="project" value="UniProtKB-KW"/>
</dbReference>
<dbReference type="Gene3D" id="1.10.8.600">
    <property type="entry name" value="Phage phi29 replication organiser protein p16.7-like"/>
    <property type="match status" value="1"/>
</dbReference>
<dbReference type="InterPro" id="IPR009595">
    <property type="entry name" value="Phage_DNA_replic_GP16.7"/>
</dbReference>
<dbReference type="InterPro" id="IPR037211">
    <property type="entry name" value="Phage_DNA_replic_GP16.7_sf"/>
</dbReference>
<dbReference type="Pfam" id="PF06720">
    <property type="entry name" value="Phi-29_GP16_7"/>
    <property type="match status" value="1"/>
</dbReference>
<dbReference type="SUPFAM" id="SSF140713">
    <property type="entry name" value="Phage replication organizer domain"/>
    <property type="match status" value="1"/>
</dbReference>
<gene>
    <name type="primary">16.7</name>
</gene>
<feature type="chain" id="PRO_0000106615" description="DNA replication protein 16.7">
    <location>
        <begin position="1"/>
        <end position="130"/>
    </location>
</feature>
<feature type="transmembrane region" description="Helical" evidence="1">
    <location>
        <begin position="1"/>
        <end position="20"/>
    </location>
</feature>
<feature type="region of interest" description="DNA-binding" evidence="1">
    <location>
        <begin position="70"/>
        <end position="130"/>
    </location>
</feature>
<feature type="coiled-coil region" evidence="2">
    <location>
        <begin position="18"/>
        <end position="57"/>
    </location>
</feature>
<feature type="site" description="Involved in dimerization" evidence="1">
    <location>
        <position position="113"/>
    </location>
</feature>
<feature type="site" description="Involved in dimerization" evidence="1">
    <location>
        <position position="116"/>
    </location>
</feature>
<feature type="site" description="Involved in oligomerization and DNA binding" evidence="1">
    <location>
        <position position="120"/>
    </location>
</feature>
<proteinExistence type="inferred from homology"/>